<evidence type="ECO:0000250" key="1"/>
<evidence type="ECO:0000255" key="2"/>
<evidence type="ECO:0000269" key="3">
    <source>
    </source>
</evidence>
<evidence type="ECO:0000269" key="4">
    <source>
    </source>
</evidence>
<evidence type="ECO:0000269" key="5">
    <source>
    </source>
</evidence>
<evidence type="ECO:0000269" key="6">
    <source>
    </source>
</evidence>
<evidence type="ECO:0000269" key="7">
    <source>
    </source>
</evidence>
<evidence type="ECO:0000305" key="8"/>
<evidence type="ECO:0007829" key="9">
    <source>
        <dbReference type="PDB" id="2EUL"/>
    </source>
</evidence>
<comment type="function">
    <text evidence="3 4 5">Inhibits all catalytic activities of RNA polymerase (RNAP) by partially occluding its substrate-binding site and preventing NTP binding.</text>
</comment>
<comment type="subunit">
    <text evidence="4 5 6 7">Interacts with RNAP.</text>
</comment>
<comment type="domain">
    <text evidence="1">Inhibitory activity is regulated via a pH-induced conformational change of the structure. At pH above 7, Gfh1 is in an inactive flipped orientation that prevents binding to RNAP. At lower pH, Gfh1 switches to an active orientation, which enables binding to RNAP and inhibitory activity (By similarity).</text>
</comment>
<comment type="similarity">
    <text evidence="8">Belongs to the GreA/GreB family.</text>
</comment>
<keyword id="KW-0002">3D-structure</keyword>
<keyword id="KW-0175">Coiled coil</keyword>
<keyword id="KW-0479">Metal-binding</keyword>
<keyword id="KW-1185">Reference proteome</keyword>
<keyword id="KW-0804">Transcription</keyword>
<keyword id="KW-0805">Transcription regulation</keyword>
<keyword id="KW-0862">Zinc</keyword>
<accession>Q5SJG6</accession>
<accession>Q8VQD5</accession>
<gene>
    <name type="primary">gfh1</name>
    <name type="ordered locus">TTHA1042</name>
</gene>
<proteinExistence type="evidence at protein level"/>
<dbReference type="EMBL" id="AF456235">
    <property type="protein sequence ID" value="AAL57612.1"/>
    <property type="molecule type" value="Genomic_DNA"/>
</dbReference>
<dbReference type="EMBL" id="AP008226">
    <property type="protein sequence ID" value="BAD70865.1"/>
    <property type="molecule type" value="Genomic_DNA"/>
</dbReference>
<dbReference type="RefSeq" id="WP_011228396.1">
    <property type="nucleotide sequence ID" value="NC_006461.1"/>
</dbReference>
<dbReference type="RefSeq" id="YP_144308.1">
    <property type="nucleotide sequence ID" value="NC_006461.1"/>
</dbReference>
<dbReference type="PDB" id="2EUL">
    <property type="method" value="X-ray"/>
    <property type="resolution" value="2.40 A"/>
    <property type="chains" value="A/B/C/D=1-156"/>
</dbReference>
<dbReference type="PDB" id="3AOH">
    <property type="method" value="X-ray"/>
    <property type="resolution" value="4.10 A"/>
    <property type="chains" value="X/Y/Z=1-156"/>
</dbReference>
<dbReference type="PDB" id="3AOI">
    <property type="method" value="X-ray"/>
    <property type="resolution" value="4.30 A"/>
    <property type="chains" value="X/Y/Z=1-156"/>
</dbReference>
<dbReference type="PDB" id="4WQT">
    <property type="method" value="X-ray"/>
    <property type="resolution" value="4.40 A"/>
    <property type="chains" value="X/Y/Z=1-156"/>
</dbReference>
<dbReference type="PDBsum" id="2EUL"/>
<dbReference type="PDBsum" id="3AOH"/>
<dbReference type="PDBsum" id="3AOI"/>
<dbReference type="PDBsum" id="4WQT"/>
<dbReference type="SMR" id="Q5SJG6"/>
<dbReference type="DIP" id="DIP-59216N"/>
<dbReference type="IntAct" id="Q5SJG6">
    <property type="interactions" value="4"/>
</dbReference>
<dbReference type="EnsemblBacteria" id="BAD70865">
    <property type="protein sequence ID" value="BAD70865"/>
    <property type="gene ID" value="BAD70865"/>
</dbReference>
<dbReference type="GeneID" id="3168268"/>
<dbReference type="KEGG" id="ttj:TTHA1042"/>
<dbReference type="PATRIC" id="fig|300852.9.peg.1022"/>
<dbReference type="eggNOG" id="COG0782">
    <property type="taxonomic scope" value="Bacteria"/>
</dbReference>
<dbReference type="HOGENOM" id="CLU_101379_2_1_0"/>
<dbReference type="PhylomeDB" id="Q5SJG6"/>
<dbReference type="EvolutionaryTrace" id="Q5SJG6"/>
<dbReference type="Proteomes" id="UP000000532">
    <property type="component" value="Chromosome"/>
</dbReference>
<dbReference type="GO" id="GO:0003677">
    <property type="term" value="F:DNA binding"/>
    <property type="evidence" value="ECO:0007669"/>
    <property type="project" value="InterPro"/>
</dbReference>
<dbReference type="GO" id="GO:0046872">
    <property type="term" value="F:metal ion binding"/>
    <property type="evidence" value="ECO:0007669"/>
    <property type="project" value="UniProtKB-KW"/>
</dbReference>
<dbReference type="GO" id="GO:0070063">
    <property type="term" value="F:RNA polymerase binding"/>
    <property type="evidence" value="ECO:0007669"/>
    <property type="project" value="InterPro"/>
</dbReference>
<dbReference type="GO" id="GO:0006354">
    <property type="term" value="P:DNA-templated transcription elongation"/>
    <property type="evidence" value="ECO:0007669"/>
    <property type="project" value="TreeGrafter"/>
</dbReference>
<dbReference type="GO" id="GO:0032784">
    <property type="term" value="P:regulation of DNA-templated transcription elongation"/>
    <property type="evidence" value="ECO:0007669"/>
    <property type="project" value="InterPro"/>
</dbReference>
<dbReference type="Gene3D" id="3.10.50.30">
    <property type="entry name" value="Transcription elongation factor, GreA/GreB, C-terminal domain"/>
    <property type="match status" value="1"/>
</dbReference>
<dbReference type="Gene3D" id="1.10.287.180">
    <property type="entry name" value="Transcription elongation factor, GreA/GreB, N-terminal domain"/>
    <property type="match status" value="1"/>
</dbReference>
<dbReference type="InterPro" id="IPR036953">
    <property type="entry name" value="GreA/GreB_C_sf"/>
</dbReference>
<dbReference type="InterPro" id="IPR018151">
    <property type="entry name" value="TF_GreA/GreB_CS"/>
</dbReference>
<dbReference type="InterPro" id="IPR001437">
    <property type="entry name" value="Tscrpt_elong_fac_GreA/B_C"/>
</dbReference>
<dbReference type="InterPro" id="IPR023459">
    <property type="entry name" value="Tscrpt_elong_fac_GreA/B_fam"/>
</dbReference>
<dbReference type="InterPro" id="IPR022691">
    <property type="entry name" value="Tscrpt_elong_fac_GreA/B_N"/>
</dbReference>
<dbReference type="InterPro" id="IPR036805">
    <property type="entry name" value="Tscrpt_elong_fac_GreA/B_N_sf"/>
</dbReference>
<dbReference type="PANTHER" id="PTHR30437">
    <property type="entry name" value="TRANSCRIPTION ELONGATION FACTOR GREA"/>
    <property type="match status" value="1"/>
</dbReference>
<dbReference type="PANTHER" id="PTHR30437:SF4">
    <property type="entry name" value="TRANSCRIPTION ELONGATION FACTOR GREA"/>
    <property type="match status" value="1"/>
</dbReference>
<dbReference type="Pfam" id="PF01272">
    <property type="entry name" value="GreA_GreB"/>
    <property type="match status" value="1"/>
</dbReference>
<dbReference type="Pfam" id="PF03449">
    <property type="entry name" value="GreA_GreB_N"/>
    <property type="match status" value="1"/>
</dbReference>
<dbReference type="PIRSF" id="PIRSF006092">
    <property type="entry name" value="GreA_GreB"/>
    <property type="match status" value="1"/>
</dbReference>
<dbReference type="SUPFAM" id="SSF54534">
    <property type="entry name" value="FKBP-like"/>
    <property type="match status" value="1"/>
</dbReference>
<dbReference type="SUPFAM" id="SSF46557">
    <property type="entry name" value="GreA transcript cleavage protein, N-terminal domain"/>
    <property type="match status" value="1"/>
</dbReference>
<dbReference type="PROSITE" id="PS00830">
    <property type="entry name" value="GREAB_2"/>
    <property type="match status" value="1"/>
</dbReference>
<feature type="chain" id="PRO_0000422249" description="Transcription inhibitor protein Gfh1">
    <location>
        <begin position="1"/>
        <end position="156"/>
    </location>
</feature>
<feature type="coiled-coil region" evidence="2">
    <location>
        <begin position="1"/>
        <end position="74"/>
    </location>
</feature>
<feature type="binding site" evidence="5">
    <location>
        <position position="20"/>
    </location>
    <ligand>
        <name>Zn(2+)</name>
        <dbReference type="ChEBI" id="CHEBI:29105"/>
    </ligand>
</feature>
<feature type="binding site" evidence="5">
    <location>
        <position position="24"/>
    </location>
    <ligand>
        <name>Zn(2+)</name>
        <dbReference type="ChEBI" id="CHEBI:29105"/>
    </ligand>
</feature>
<feature type="sequence conflict" description="In Ref. 1; AAL57612." evidence="8" ref="1">
    <original>R</original>
    <variation>K</variation>
    <location>
        <position position="146"/>
    </location>
</feature>
<feature type="strand" evidence="9">
    <location>
        <begin position="5"/>
        <end position="7"/>
    </location>
</feature>
<feature type="helix" evidence="9">
    <location>
        <begin position="9"/>
        <end position="38"/>
    </location>
</feature>
<feature type="helix" evidence="9">
    <location>
        <begin position="46"/>
        <end position="71"/>
    </location>
</feature>
<feature type="strand" evidence="9">
    <location>
        <begin position="72"/>
        <end position="74"/>
    </location>
</feature>
<feature type="strand" evidence="9">
    <location>
        <begin position="88"/>
        <end position="93"/>
    </location>
</feature>
<feature type="turn" evidence="9">
    <location>
        <begin position="94"/>
        <end position="97"/>
    </location>
</feature>
<feature type="strand" evidence="9">
    <location>
        <begin position="98"/>
        <end position="105"/>
    </location>
</feature>
<feature type="turn" evidence="9">
    <location>
        <begin position="107"/>
        <end position="109"/>
    </location>
</feature>
<feature type="strand" evidence="9">
    <location>
        <begin position="114"/>
        <end position="116"/>
    </location>
</feature>
<feature type="strand" evidence="9">
    <location>
        <begin position="118"/>
        <end position="120"/>
    </location>
</feature>
<feature type="helix" evidence="9">
    <location>
        <begin position="124"/>
        <end position="129"/>
    </location>
</feature>
<feature type="strand" evidence="9">
    <location>
        <begin position="137"/>
        <end position="140"/>
    </location>
</feature>
<feature type="strand" evidence="9">
    <location>
        <begin position="147"/>
        <end position="154"/>
    </location>
</feature>
<organism>
    <name type="scientific">Thermus thermophilus (strain ATCC 27634 / DSM 579 / HB8)</name>
    <dbReference type="NCBI Taxonomy" id="300852"/>
    <lineage>
        <taxon>Bacteria</taxon>
        <taxon>Thermotogati</taxon>
        <taxon>Deinococcota</taxon>
        <taxon>Deinococci</taxon>
        <taxon>Thermales</taxon>
        <taxon>Thermaceae</taxon>
        <taxon>Thermus</taxon>
    </lineage>
</organism>
<sequence>MAREVKLTKAGYERLMQQLERERERLQEATKILQELMESSDDYDDSGLEAAKQEKARIEARIDSLEDILSRAVILEEGSGEVIGLGSVVELEDPLSGERLSVQVVSPAEANVLDTPMKISDASPMGKALLGHRVGDVLSLDTPKGRREFRVVAIHG</sequence>
<reference key="1">
    <citation type="journal article" date="2002" name="J. Biol. Chem.">
        <title>Transcript cleavage by Thermus thermophilus RNA polymerase. Effects of GreA and anti-GreA factors.</title>
        <authorList>
            <person name="Hogan B.P."/>
            <person name="Hartsch T."/>
            <person name="Erie D.A."/>
        </authorList>
    </citation>
    <scope>NUCLEOTIDE SEQUENCE [GENOMIC DNA]</scope>
    <scope>FUNCTION</scope>
    <scope>GENE NAME</scope>
    <source>
        <strain>ATCC 27634 / DSM 579 / HB8</strain>
    </source>
</reference>
<reference key="2">
    <citation type="submission" date="2004-11" db="EMBL/GenBank/DDBJ databases">
        <title>Complete genome sequence of Thermus thermophilus HB8.</title>
        <authorList>
            <person name="Masui R."/>
            <person name="Kurokawa K."/>
            <person name="Nakagawa N."/>
            <person name="Tokunaga F."/>
            <person name="Koyama Y."/>
            <person name="Shibata T."/>
            <person name="Oshima T."/>
            <person name="Yokoyama S."/>
            <person name="Yasunaga T."/>
            <person name="Kuramitsu S."/>
        </authorList>
    </citation>
    <scope>NUCLEOTIDE SEQUENCE [LARGE SCALE GENOMIC DNA]</scope>
    <source>
        <strain>ATCC 27634 / DSM 579 / HB8</strain>
    </source>
</reference>
<reference key="3">
    <citation type="journal article" date="2003" name="Methods Enzymol.">
        <title>Biochemical assays of Gre factors of Thermus thermophilus.</title>
        <authorList>
            <person name="Laptenko O."/>
            <person name="Borukhov S."/>
        </authorList>
    </citation>
    <scope>FUNCTION</scope>
    <scope>INTERACTION WITH RNAP</scope>
</reference>
<reference key="4">
    <citation type="journal article" date="2006" name="Acta Crystallogr. F">
        <title>Cloning, expression, purification, crystallization and initial crystallographic analysis of transcription elongation factors GreB from Escherichia coli and Gfh1 from Thermus thermophilus.</title>
        <authorList>
            <person name="Perederina A.A."/>
            <person name="Vassylyeva M.N."/>
            <person name="Berezin I.A."/>
            <person name="Svetlov V."/>
            <person name="Artsimovitch I."/>
            <person name="Vassylyev D.G."/>
        </authorList>
    </citation>
    <scope>CRYSTALLIZATION</scope>
    <source>
        <strain>ATCC 27634 / DSM 579 / HB8</strain>
    </source>
</reference>
<reference key="5">
    <citation type="journal article" date="2010" name="Acta Crystallogr. F">
        <title>Crystallization and preliminary X-ray crystallographic analysis of Thermus thermophilus transcription elongation complex bound to Gfh1.</title>
        <authorList>
            <person name="Tagami S."/>
            <person name="Sekine S."/>
            <person name="Kumarevel T."/>
            <person name="Yamamoto M."/>
            <person name="Yokoyama S."/>
        </authorList>
    </citation>
    <scope>CRYSTALLIZATION</scope>
    <scope>INTERACTION WITH RNAP</scope>
</reference>
<reference key="6">
    <citation type="journal article" date="2006" name="J. Biol. Chem.">
        <title>Regulation through the RNA polymerase secondary channel. Structural and functional variability of the coiled-coil transcription factors.</title>
        <authorList>
            <person name="Symersky J."/>
            <person name="Perederina A."/>
            <person name="Vassylyeva M.N."/>
            <person name="Svetlov V."/>
            <person name="Artsimovitch I."/>
            <person name="Vassylyev D.G."/>
        </authorList>
    </citation>
    <scope>X-RAY CRYSTALLOGRAPHY (2.40 ANGSTROMS) IN COMPLEX WITH ZINC</scope>
    <scope>FUNCTION</scope>
</reference>
<reference key="7">
    <citation type="journal article" date="2010" name="Nature">
        <title>Crystal structure of bacterial RNA polymerase bound with a transcription inhibitor protein.</title>
        <authorList>
            <person name="Tagami S."/>
            <person name="Sekine S."/>
            <person name="Kumarevel T."/>
            <person name="Hino N."/>
            <person name="Murayama Y."/>
            <person name="Kamegamori S."/>
            <person name="Yamamoto M."/>
            <person name="Sakamoto K."/>
            <person name="Yokoyama S."/>
        </authorList>
    </citation>
    <scope>X-RAY CRYSTALLOGRAPHY (4.10 ANGSTROMS) IN COMPLEX WITH RNAP</scope>
</reference>
<name>GFH1_THET8</name>
<protein>
    <recommendedName>
        <fullName>Transcription inhibitor protein Gfh1</fullName>
    </recommendedName>
    <alternativeName>
        <fullName>Anti-cleavage anti-GreA transcription factor</fullName>
    </alternativeName>
    <alternativeName>
        <fullName>Gre factor homolog 1</fullName>
    </alternativeName>
</protein>